<comment type="function">
    <text evidence="1">Reversibly catalyzes the transfer of the carbamoyl group from carbamoyl phosphate (CP) to the N(epsilon) atom of ornithine (ORN) to produce L-citrulline.</text>
</comment>
<comment type="catalytic activity">
    <reaction evidence="2">
        <text>carbamoyl phosphate + L-ornithine = L-citrulline + phosphate + H(+)</text>
        <dbReference type="Rhea" id="RHEA:19513"/>
        <dbReference type="ChEBI" id="CHEBI:15378"/>
        <dbReference type="ChEBI" id="CHEBI:43474"/>
        <dbReference type="ChEBI" id="CHEBI:46911"/>
        <dbReference type="ChEBI" id="CHEBI:57743"/>
        <dbReference type="ChEBI" id="CHEBI:58228"/>
        <dbReference type="EC" id="2.1.3.3"/>
    </reaction>
</comment>
<comment type="pathway">
    <text evidence="2">Amino-acid biosynthesis; L-arginine biosynthesis; L-arginine from L-ornithine and carbamoyl phosphate: step 1/3.</text>
</comment>
<comment type="subcellular location">
    <subcellularLocation>
        <location evidence="2">Cytoplasm</location>
    </subcellularLocation>
</comment>
<comment type="similarity">
    <text evidence="2">Belongs to the aspartate/ornithine carbamoyltransferase superfamily. OTCase family.</text>
</comment>
<protein>
    <recommendedName>
        <fullName evidence="2">Ornithine carbamoyltransferase</fullName>
        <shortName evidence="2">OTCase</shortName>
        <ecNumber evidence="2">2.1.3.3</ecNumber>
    </recommendedName>
</protein>
<name>OTC_ACIAD</name>
<accession>Q6FCH8</accession>
<evidence type="ECO:0000250" key="1"/>
<evidence type="ECO:0000255" key="2">
    <source>
        <dbReference type="HAMAP-Rule" id="MF_01109"/>
    </source>
</evidence>
<feature type="chain" id="PRO_0000112870" description="Ornithine carbamoyltransferase">
    <location>
        <begin position="1"/>
        <end position="306"/>
    </location>
</feature>
<feature type="binding site" evidence="2">
    <location>
        <begin position="53"/>
        <end position="56"/>
    </location>
    <ligand>
        <name>carbamoyl phosphate</name>
        <dbReference type="ChEBI" id="CHEBI:58228"/>
    </ligand>
</feature>
<feature type="binding site" evidence="2">
    <location>
        <position position="80"/>
    </location>
    <ligand>
        <name>carbamoyl phosphate</name>
        <dbReference type="ChEBI" id="CHEBI:58228"/>
    </ligand>
</feature>
<feature type="binding site" evidence="2">
    <location>
        <position position="104"/>
    </location>
    <ligand>
        <name>carbamoyl phosphate</name>
        <dbReference type="ChEBI" id="CHEBI:58228"/>
    </ligand>
</feature>
<feature type="binding site" evidence="2">
    <location>
        <begin position="131"/>
        <end position="134"/>
    </location>
    <ligand>
        <name>carbamoyl phosphate</name>
        <dbReference type="ChEBI" id="CHEBI:58228"/>
    </ligand>
</feature>
<feature type="binding site" evidence="2">
    <location>
        <position position="162"/>
    </location>
    <ligand>
        <name>L-ornithine</name>
        <dbReference type="ChEBI" id="CHEBI:46911"/>
    </ligand>
</feature>
<feature type="binding site" evidence="2">
    <location>
        <position position="219"/>
    </location>
    <ligand>
        <name>L-ornithine</name>
        <dbReference type="ChEBI" id="CHEBI:46911"/>
    </ligand>
</feature>
<feature type="binding site" evidence="2">
    <location>
        <begin position="223"/>
        <end position="224"/>
    </location>
    <ligand>
        <name>L-ornithine</name>
        <dbReference type="ChEBI" id="CHEBI:46911"/>
    </ligand>
</feature>
<feature type="binding site" evidence="2">
    <location>
        <begin position="259"/>
        <end position="260"/>
    </location>
    <ligand>
        <name>carbamoyl phosphate</name>
        <dbReference type="ChEBI" id="CHEBI:58228"/>
    </ligand>
</feature>
<feature type="binding site" evidence="2">
    <location>
        <position position="287"/>
    </location>
    <ligand>
        <name>carbamoyl phosphate</name>
        <dbReference type="ChEBI" id="CHEBI:58228"/>
    </ligand>
</feature>
<sequence>MALRHFLTLRDLSSLELNSILDRASELKRQQHANQVYQPFKGKVLGMIFEKSSTRTRISFEAGICQFGGSAIFLSPRDTQLGRGEPIEDSARVISSMLDIVMIRTFGHNIVERFASFSKVPVINGLTDDHHPCQLLADLQTYQEHRGSIKGKTVAWIGDGNNMCNSYMEAAHMMGFKLKVGSPKGYEPKPEFLAEFAHCVEVFNSAEDAAVNADLIVTDVWASMGQEEEQKLREKAFLTFQVNEALMALAHPECLFMHCLPAHRGEEISENMLDHKNSVVWDEAENRLHAQKALMEFLLNENAKRA</sequence>
<keyword id="KW-0028">Amino-acid biosynthesis</keyword>
<keyword id="KW-0055">Arginine biosynthesis</keyword>
<keyword id="KW-0963">Cytoplasm</keyword>
<keyword id="KW-0808">Transferase</keyword>
<reference key="1">
    <citation type="journal article" date="2004" name="Nucleic Acids Res.">
        <title>Unique features revealed by the genome sequence of Acinetobacter sp. ADP1, a versatile and naturally transformation competent bacterium.</title>
        <authorList>
            <person name="Barbe V."/>
            <person name="Vallenet D."/>
            <person name="Fonknechten N."/>
            <person name="Kreimeyer A."/>
            <person name="Oztas S."/>
            <person name="Labarre L."/>
            <person name="Cruveiller S."/>
            <person name="Robert C."/>
            <person name="Duprat S."/>
            <person name="Wincker P."/>
            <person name="Ornston L.N."/>
            <person name="Weissenbach J."/>
            <person name="Marliere P."/>
            <person name="Cohen G.N."/>
            <person name="Medigue C."/>
        </authorList>
    </citation>
    <scope>NUCLEOTIDE SEQUENCE [LARGE SCALE GENOMIC DNA]</scope>
    <source>
        <strain>ATCC 33305 / BD413 / ADP1</strain>
    </source>
</reference>
<proteinExistence type="inferred from homology"/>
<gene>
    <name evidence="2" type="primary">argF</name>
    <name type="ordered locus">ACIAD1366</name>
</gene>
<organism>
    <name type="scientific">Acinetobacter baylyi (strain ATCC 33305 / BD413 / ADP1)</name>
    <dbReference type="NCBI Taxonomy" id="62977"/>
    <lineage>
        <taxon>Bacteria</taxon>
        <taxon>Pseudomonadati</taxon>
        <taxon>Pseudomonadota</taxon>
        <taxon>Gammaproteobacteria</taxon>
        <taxon>Moraxellales</taxon>
        <taxon>Moraxellaceae</taxon>
        <taxon>Acinetobacter</taxon>
    </lineage>
</organism>
<dbReference type="EC" id="2.1.3.3" evidence="2"/>
<dbReference type="EMBL" id="CR543861">
    <property type="protein sequence ID" value="CAG68233.1"/>
    <property type="molecule type" value="Genomic_DNA"/>
</dbReference>
<dbReference type="RefSeq" id="WP_004925687.1">
    <property type="nucleotide sequence ID" value="NC_005966.1"/>
</dbReference>
<dbReference type="SMR" id="Q6FCH8"/>
<dbReference type="STRING" id="202950.GCA_001485005_01124"/>
<dbReference type="GeneID" id="45233782"/>
<dbReference type="KEGG" id="aci:ACIAD1366"/>
<dbReference type="eggNOG" id="COG0078">
    <property type="taxonomic scope" value="Bacteria"/>
</dbReference>
<dbReference type="HOGENOM" id="CLU_043846_3_2_6"/>
<dbReference type="OrthoDB" id="9802587at2"/>
<dbReference type="BioCyc" id="ASP62977:ACIAD_RS06300-MONOMER"/>
<dbReference type="UniPathway" id="UPA00068">
    <property type="reaction ID" value="UER00112"/>
</dbReference>
<dbReference type="Proteomes" id="UP000000430">
    <property type="component" value="Chromosome"/>
</dbReference>
<dbReference type="GO" id="GO:0005737">
    <property type="term" value="C:cytoplasm"/>
    <property type="evidence" value="ECO:0007669"/>
    <property type="project" value="UniProtKB-SubCell"/>
</dbReference>
<dbReference type="GO" id="GO:0016597">
    <property type="term" value="F:amino acid binding"/>
    <property type="evidence" value="ECO:0007669"/>
    <property type="project" value="InterPro"/>
</dbReference>
<dbReference type="GO" id="GO:0004585">
    <property type="term" value="F:ornithine carbamoyltransferase activity"/>
    <property type="evidence" value="ECO:0007669"/>
    <property type="project" value="UniProtKB-UniRule"/>
</dbReference>
<dbReference type="GO" id="GO:0042450">
    <property type="term" value="P:arginine biosynthetic process via ornithine"/>
    <property type="evidence" value="ECO:0007669"/>
    <property type="project" value="TreeGrafter"/>
</dbReference>
<dbReference type="GO" id="GO:0019240">
    <property type="term" value="P:citrulline biosynthetic process"/>
    <property type="evidence" value="ECO:0007669"/>
    <property type="project" value="TreeGrafter"/>
</dbReference>
<dbReference type="GO" id="GO:0006526">
    <property type="term" value="P:L-arginine biosynthetic process"/>
    <property type="evidence" value="ECO:0007669"/>
    <property type="project" value="UniProtKB-UniRule"/>
</dbReference>
<dbReference type="FunFam" id="3.40.50.1370:FF:000008">
    <property type="entry name" value="Ornithine carbamoyltransferase"/>
    <property type="match status" value="1"/>
</dbReference>
<dbReference type="Gene3D" id="3.40.50.1370">
    <property type="entry name" value="Aspartate/ornithine carbamoyltransferase"/>
    <property type="match status" value="2"/>
</dbReference>
<dbReference type="HAMAP" id="MF_01109">
    <property type="entry name" value="OTCase"/>
    <property type="match status" value="1"/>
</dbReference>
<dbReference type="InterPro" id="IPR006132">
    <property type="entry name" value="Asp/Orn_carbamoyltranf_P-bd"/>
</dbReference>
<dbReference type="InterPro" id="IPR006130">
    <property type="entry name" value="Asp/Orn_carbamoylTrfase"/>
</dbReference>
<dbReference type="InterPro" id="IPR036901">
    <property type="entry name" value="Asp/Orn_carbamoylTrfase_sf"/>
</dbReference>
<dbReference type="InterPro" id="IPR006131">
    <property type="entry name" value="Asp_carbamoyltransf_Asp/Orn-bd"/>
</dbReference>
<dbReference type="InterPro" id="IPR002292">
    <property type="entry name" value="Orn/put_carbamltrans"/>
</dbReference>
<dbReference type="InterPro" id="IPR024904">
    <property type="entry name" value="OTCase_ArgI"/>
</dbReference>
<dbReference type="NCBIfam" id="TIGR00658">
    <property type="entry name" value="orni_carb_tr"/>
    <property type="match status" value="1"/>
</dbReference>
<dbReference type="NCBIfam" id="NF001986">
    <property type="entry name" value="PRK00779.1"/>
    <property type="match status" value="1"/>
</dbReference>
<dbReference type="PANTHER" id="PTHR45753">
    <property type="entry name" value="ORNITHINE CARBAMOYLTRANSFERASE, MITOCHONDRIAL"/>
    <property type="match status" value="1"/>
</dbReference>
<dbReference type="PANTHER" id="PTHR45753:SF3">
    <property type="entry name" value="ORNITHINE TRANSCARBAMYLASE, MITOCHONDRIAL"/>
    <property type="match status" value="1"/>
</dbReference>
<dbReference type="Pfam" id="PF00185">
    <property type="entry name" value="OTCace"/>
    <property type="match status" value="1"/>
</dbReference>
<dbReference type="Pfam" id="PF02729">
    <property type="entry name" value="OTCace_N"/>
    <property type="match status" value="1"/>
</dbReference>
<dbReference type="PRINTS" id="PR00100">
    <property type="entry name" value="AOTCASE"/>
</dbReference>
<dbReference type="PRINTS" id="PR00102">
    <property type="entry name" value="OTCASE"/>
</dbReference>
<dbReference type="SUPFAM" id="SSF53671">
    <property type="entry name" value="Aspartate/ornithine carbamoyltransferase"/>
    <property type="match status" value="1"/>
</dbReference>
<dbReference type="PROSITE" id="PS00097">
    <property type="entry name" value="CARBAMOYLTRANSFERASE"/>
    <property type="match status" value="1"/>
</dbReference>